<name>MUTS_METBF</name>
<reference key="1">
    <citation type="journal article" date="2006" name="J. Bacteriol.">
        <title>The Methanosarcina barkeri genome: comparative analysis with Methanosarcina acetivorans and Methanosarcina mazei reveals extensive rearrangement within methanosarcinal genomes.</title>
        <authorList>
            <person name="Maeder D.L."/>
            <person name="Anderson I."/>
            <person name="Brettin T.S."/>
            <person name="Bruce D.C."/>
            <person name="Gilna P."/>
            <person name="Han C.S."/>
            <person name="Lapidus A."/>
            <person name="Metcalf W.W."/>
            <person name="Saunders E."/>
            <person name="Tapia R."/>
            <person name="Sowers K.R."/>
        </authorList>
    </citation>
    <scope>NUCLEOTIDE SEQUENCE [LARGE SCALE GENOMIC DNA]</scope>
    <source>
        <strain>Fusaro / DSM 804</strain>
    </source>
</reference>
<evidence type="ECO:0000255" key="1">
    <source>
        <dbReference type="HAMAP-Rule" id="MF_00096"/>
    </source>
</evidence>
<proteinExistence type="inferred from homology"/>
<comment type="function">
    <text evidence="1">This protein is involved in the repair of mismatches in DNA. It is possible that it carries out the mismatch recognition step. This protein has a weak ATPase activity.</text>
</comment>
<comment type="similarity">
    <text evidence="1">Belongs to the DNA mismatch repair MutS family.</text>
</comment>
<keyword id="KW-0067">ATP-binding</keyword>
<keyword id="KW-0227">DNA damage</keyword>
<keyword id="KW-0234">DNA repair</keyword>
<keyword id="KW-0238">DNA-binding</keyword>
<keyword id="KW-0547">Nucleotide-binding</keyword>
<gene>
    <name evidence="1" type="primary">mutS</name>
    <name type="ordered locus">Mbar_A1495</name>
</gene>
<sequence length="900" mass="101117">MTKMMTPAMCQYYEAKQAYPDTLIFFRMGDFYESFGEDAKTIAKELEITLTARGKDKSGERMPLAGIPYHAIDTYLPRLINKGYKVAICEQLEDPKKAKGIVKRGVVRVVTPGTAIDSSMFSDASNNYLMAVAGREIGKPGKNAENEFEIGVSFLDISTGEFLTTQFRDSENFEKLLSELARMRPSECILPSSLYENPALAERLRAQTIVQEFAPDISGAKEAGERLKNHFRVATLEGMGCENLDFAVYSAWAALEYAQTTQMRELTHINTLRTYSNSEFMILDSVTLRNLEIVKNVRDEGDENSLYRILNHTKTPMGSRALKKWLLKPLLSVEKINYRLDAVEELTAKPLLRYDLRNWLSDVRDIERLVGRVVYGNSNARDLVALKKSLEALPPVRDSLLENIESTILNDIAVGLASFSELENLAEMIDRAIVDEPPISVREGGMIKSGYNAELDELKDIASNSRQWIANFQQKERERSGIKSLKVGYNKIFGYYIEVTNANSSQVPEDYIRKQTMANAERFFTPELKEKESLILTANEKAIALEYEIFTEILQTLSAHSRELQETAERIGTLDVLTDLAEVAENNNYIRPQLTDDCKILIRDGRHPVVENTVHGGFVPNDTEMDCKENQFLLVTGPNMAGKSTYMRQTALIAIMAQVGSFVPASYASIGIIDQVFTRIGAFDDLASGQSTFMVEMVELANILNNASPRSLVLLDEIGRGTSTYDGYSIAKAVVEFLHNRGKVGVRALFATHYHQLTALEEKLKRVKNYHVAVKEEGHELVFLRKIVPGATDRSYGIQVARLAGVPEKVIERANEILKELERENVLEEVEDSKNGKKRKSKATARYTQMMLFDPGDSGGNTAKVNRPSPVETVLKKLNVDEMTPIEALNKLHELKRLLN</sequence>
<accession>Q46CE2</accession>
<protein>
    <recommendedName>
        <fullName evidence="1">DNA mismatch repair protein MutS</fullName>
    </recommendedName>
</protein>
<organism>
    <name type="scientific">Methanosarcina barkeri (strain Fusaro / DSM 804)</name>
    <dbReference type="NCBI Taxonomy" id="269797"/>
    <lineage>
        <taxon>Archaea</taxon>
        <taxon>Methanobacteriati</taxon>
        <taxon>Methanobacteriota</taxon>
        <taxon>Stenosarchaea group</taxon>
        <taxon>Methanomicrobia</taxon>
        <taxon>Methanosarcinales</taxon>
        <taxon>Methanosarcinaceae</taxon>
        <taxon>Methanosarcina</taxon>
    </lineage>
</organism>
<dbReference type="EMBL" id="CP000099">
    <property type="protein sequence ID" value="AAZ70450.1"/>
    <property type="molecule type" value="Genomic_DNA"/>
</dbReference>
<dbReference type="SMR" id="Q46CE2"/>
<dbReference type="STRING" id="269797.Mbar_A1495"/>
<dbReference type="PaxDb" id="269797-Mbar_A1495"/>
<dbReference type="KEGG" id="mba:Mbar_A1495"/>
<dbReference type="eggNOG" id="arCOG02897">
    <property type="taxonomic scope" value="Archaea"/>
</dbReference>
<dbReference type="HOGENOM" id="CLU_002472_3_1_2"/>
<dbReference type="OrthoDB" id="146065at2157"/>
<dbReference type="GO" id="GO:0005524">
    <property type="term" value="F:ATP binding"/>
    <property type="evidence" value="ECO:0007669"/>
    <property type="project" value="UniProtKB-UniRule"/>
</dbReference>
<dbReference type="GO" id="GO:0140664">
    <property type="term" value="F:ATP-dependent DNA damage sensor activity"/>
    <property type="evidence" value="ECO:0007669"/>
    <property type="project" value="InterPro"/>
</dbReference>
<dbReference type="GO" id="GO:0003684">
    <property type="term" value="F:damaged DNA binding"/>
    <property type="evidence" value="ECO:0007669"/>
    <property type="project" value="UniProtKB-UniRule"/>
</dbReference>
<dbReference type="GO" id="GO:0030983">
    <property type="term" value="F:mismatched DNA binding"/>
    <property type="evidence" value="ECO:0007669"/>
    <property type="project" value="InterPro"/>
</dbReference>
<dbReference type="GO" id="GO:0006298">
    <property type="term" value="P:mismatch repair"/>
    <property type="evidence" value="ECO:0007669"/>
    <property type="project" value="UniProtKB-UniRule"/>
</dbReference>
<dbReference type="CDD" id="cd03284">
    <property type="entry name" value="ABC_MutS1"/>
    <property type="match status" value="1"/>
</dbReference>
<dbReference type="FunFam" id="1.10.1420.10:FF:000007">
    <property type="entry name" value="DNA mismatch repair protein MutS"/>
    <property type="match status" value="1"/>
</dbReference>
<dbReference type="FunFam" id="3.40.1170.10:FF:000001">
    <property type="entry name" value="DNA mismatch repair protein MutS"/>
    <property type="match status" value="1"/>
</dbReference>
<dbReference type="FunFam" id="3.40.50.300:FF:001579">
    <property type="entry name" value="DNA mismatch repair protein MutS"/>
    <property type="match status" value="1"/>
</dbReference>
<dbReference type="Gene3D" id="1.10.1420.10">
    <property type="match status" value="2"/>
</dbReference>
<dbReference type="Gene3D" id="6.10.140.430">
    <property type="match status" value="1"/>
</dbReference>
<dbReference type="Gene3D" id="3.40.1170.10">
    <property type="entry name" value="DNA repair protein MutS, domain I"/>
    <property type="match status" value="1"/>
</dbReference>
<dbReference type="Gene3D" id="3.30.420.110">
    <property type="entry name" value="MutS, connector domain"/>
    <property type="match status" value="1"/>
</dbReference>
<dbReference type="Gene3D" id="3.40.50.300">
    <property type="entry name" value="P-loop containing nucleotide triphosphate hydrolases"/>
    <property type="match status" value="1"/>
</dbReference>
<dbReference type="HAMAP" id="MF_00096">
    <property type="entry name" value="MutS"/>
    <property type="match status" value="1"/>
</dbReference>
<dbReference type="InterPro" id="IPR005748">
    <property type="entry name" value="DNA_mismatch_repair_MutS"/>
</dbReference>
<dbReference type="InterPro" id="IPR007695">
    <property type="entry name" value="DNA_mismatch_repair_MutS-lik_N"/>
</dbReference>
<dbReference type="InterPro" id="IPR017261">
    <property type="entry name" value="DNA_mismatch_repair_MutS/MSH"/>
</dbReference>
<dbReference type="InterPro" id="IPR000432">
    <property type="entry name" value="DNA_mismatch_repair_MutS_C"/>
</dbReference>
<dbReference type="InterPro" id="IPR007861">
    <property type="entry name" value="DNA_mismatch_repair_MutS_clamp"/>
</dbReference>
<dbReference type="InterPro" id="IPR007696">
    <property type="entry name" value="DNA_mismatch_repair_MutS_core"/>
</dbReference>
<dbReference type="InterPro" id="IPR016151">
    <property type="entry name" value="DNA_mismatch_repair_MutS_N"/>
</dbReference>
<dbReference type="InterPro" id="IPR036187">
    <property type="entry name" value="DNA_mismatch_repair_MutS_sf"/>
</dbReference>
<dbReference type="InterPro" id="IPR007860">
    <property type="entry name" value="DNA_mmatch_repair_MutS_con_dom"/>
</dbReference>
<dbReference type="InterPro" id="IPR045076">
    <property type="entry name" value="MutS"/>
</dbReference>
<dbReference type="InterPro" id="IPR036678">
    <property type="entry name" value="MutS_con_dom_sf"/>
</dbReference>
<dbReference type="InterPro" id="IPR027417">
    <property type="entry name" value="P-loop_NTPase"/>
</dbReference>
<dbReference type="NCBIfam" id="TIGR01070">
    <property type="entry name" value="mutS1"/>
    <property type="match status" value="1"/>
</dbReference>
<dbReference type="NCBIfam" id="NF003810">
    <property type="entry name" value="PRK05399.1"/>
    <property type="match status" value="1"/>
</dbReference>
<dbReference type="PANTHER" id="PTHR11361:SF34">
    <property type="entry name" value="DNA MISMATCH REPAIR PROTEIN MSH1, MITOCHONDRIAL"/>
    <property type="match status" value="1"/>
</dbReference>
<dbReference type="PANTHER" id="PTHR11361">
    <property type="entry name" value="DNA MISMATCH REPAIR PROTEIN MUTS FAMILY MEMBER"/>
    <property type="match status" value="1"/>
</dbReference>
<dbReference type="Pfam" id="PF01624">
    <property type="entry name" value="MutS_I"/>
    <property type="match status" value="1"/>
</dbReference>
<dbReference type="Pfam" id="PF05188">
    <property type="entry name" value="MutS_II"/>
    <property type="match status" value="1"/>
</dbReference>
<dbReference type="Pfam" id="PF05192">
    <property type="entry name" value="MutS_III"/>
    <property type="match status" value="1"/>
</dbReference>
<dbReference type="Pfam" id="PF05190">
    <property type="entry name" value="MutS_IV"/>
    <property type="match status" value="1"/>
</dbReference>
<dbReference type="Pfam" id="PF00488">
    <property type="entry name" value="MutS_V"/>
    <property type="match status" value="1"/>
</dbReference>
<dbReference type="PIRSF" id="PIRSF037677">
    <property type="entry name" value="DNA_mis_repair_Msh6"/>
    <property type="match status" value="1"/>
</dbReference>
<dbReference type="SMART" id="SM00534">
    <property type="entry name" value="MUTSac"/>
    <property type="match status" value="1"/>
</dbReference>
<dbReference type="SMART" id="SM00533">
    <property type="entry name" value="MUTSd"/>
    <property type="match status" value="1"/>
</dbReference>
<dbReference type="SUPFAM" id="SSF55271">
    <property type="entry name" value="DNA repair protein MutS, domain I"/>
    <property type="match status" value="1"/>
</dbReference>
<dbReference type="SUPFAM" id="SSF53150">
    <property type="entry name" value="DNA repair protein MutS, domain II"/>
    <property type="match status" value="1"/>
</dbReference>
<dbReference type="SUPFAM" id="SSF48334">
    <property type="entry name" value="DNA repair protein MutS, domain III"/>
    <property type="match status" value="1"/>
</dbReference>
<dbReference type="SUPFAM" id="SSF52540">
    <property type="entry name" value="P-loop containing nucleoside triphosphate hydrolases"/>
    <property type="match status" value="1"/>
</dbReference>
<dbReference type="PROSITE" id="PS00486">
    <property type="entry name" value="DNA_MISMATCH_REPAIR_2"/>
    <property type="match status" value="1"/>
</dbReference>
<feature type="chain" id="PRO_0000224424" description="DNA mismatch repair protein MutS">
    <location>
        <begin position="1"/>
        <end position="900"/>
    </location>
</feature>
<feature type="binding site" evidence="1">
    <location>
        <begin position="637"/>
        <end position="644"/>
    </location>
    <ligand>
        <name>ATP</name>
        <dbReference type="ChEBI" id="CHEBI:30616"/>
    </ligand>
</feature>